<dbReference type="EC" id="2.7.7.6" evidence="1"/>
<dbReference type="EMBL" id="CP001022">
    <property type="protein sequence ID" value="ACB61381.1"/>
    <property type="molecule type" value="Genomic_DNA"/>
</dbReference>
<dbReference type="RefSeq" id="WP_012370799.1">
    <property type="nucleotide sequence ID" value="NC_010556.1"/>
</dbReference>
<dbReference type="SMR" id="B1YIQ5"/>
<dbReference type="STRING" id="262543.Exig_1929"/>
<dbReference type="KEGG" id="esi:Exig_1929"/>
<dbReference type="eggNOG" id="COG1758">
    <property type="taxonomic scope" value="Bacteria"/>
</dbReference>
<dbReference type="HOGENOM" id="CLU_125406_6_0_9"/>
<dbReference type="OrthoDB" id="9815459at2"/>
<dbReference type="Proteomes" id="UP000001681">
    <property type="component" value="Chromosome"/>
</dbReference>
<dbReference type="GO" id="GO:0000428">
    <property type="term" value="C:DNA-directed RNA polymerase complex"/>
    <property type="evidence" value="ECO:0007669"/>
    <property type="project" value="UniProtKB-KW"/>
</dbReference>
<dbReference type="GO" id="GO:0003677">
    <property type="term" value="F:DNA binding"/>
    <property type="evidence" value="ECO:0007669"/>
    <property type="project" value="UniProtKB-UniRule"/>
</dbReference>
<dbReference type="GO" id="GO:0003899">
    <property type="term" value="F:DNA-directed RNA polymerase activity"/>
    <property type="evidence" value="ECO:0007669"/>
    <property type="project" value="UniProtKB-UniRule"/>
</dbReference>
<dbReference type="GO" id="GO:0006351">
    <property type="term" value="P:DNA-templated transcription"/>
    <property type="evidence" value="ECO:0007669"/>
    <property type="project" value="UniProtKB-UniRule"/>
</dbReference>
<dbReference type="Gene3D" id="3.90.940.10">
    <property type="match status" value="1"/>
</dbReference>
<dbReference type="HAMAP" id="MF_00366">
    <property type="entry name" value="RNApol_bact_RpoZ"/>
    <property type="match status" value="1"/>
</dbReference>
<dbReference type="InterPro" id="IPR003716">
    <property type="entry name" value="DNA-dir_RNA_pol_omega"/>
</dbReference>
<dbReference type="InterPro" id="IPR006110">
    <property type="entry name" value="Pol_omega/Rpo6/RPB6"/>
</dbReference>
<dbReference type="InterPro" id="IPR036161">
    <property type="entry name" value="RPB6/omega-like_sf"/>
</dbReference>
<dbReference type="NCBIfam" id="TIGR00690">
    <property type="entry name" value="rpoZ"/>
    <property type="match status" value="1"/>
</dbReference>
<dbReference type="PANTHER" id="PTHR34476">
    <property type="entry name" value="DNA-DIRECTED RNA POLYMERASE SUBUNIT OMEGA"/>
    <property type="match status" value="1"/>
</dbReference>
<dbReference type="PANTHER" id="PTHR34476:SF1">
    <property type="entry name" value="DNA-DIRECTED RNA POLYMERASE SUBUNIT OMEGA"/>
    <property type="match status" value="1"/>
</dbReference>
<dbReference type="Pfam" id="PF01192">
    <property type="entry name" value="RNA_pol_Rpb6"/>
    <property type="match status" value="1"/>
</dbReference>
<dbReference type="SMART" id="SM01409">
    <property type="entry name" value="RNA_pol_Rpb6"/>
    <property type="match status" value="1"/>
</dbReference>
<dbReference type="SUPFAM" id="SSF63562">
    <property type="entry name" value="RPB6/omega subunit-like"/>
    <property type="match status" value="1"/>
</dbReference>
<proteinExistence type="inferred from homology"/>
<comment type="function">
    <text evidence="1">Promotes RNA polymerase assembly. Latches the N- and C-terminal regions of the beta' subunit thereby facilitating its interaction with the beta and alpha subunits.</text>
</comment>
<comment type="catalytic activity">
    <reaction evidence="1">
        <text>RNA(n) + a ribonucleoside 5'-triphosphate = RNA(n+1) + diphosphate</text>
        <dbReference type="Rhea" id="RHEA:21248"/>
        <dbReference type="Rhea" id="RHEA-COMP:14527"/>
        <dbReference type="Rhea" id="RHEA-COMP:17342"/>
        <dbReference type="ChEBI" id="CHEBI:33019"/>
        <dbReference type="ChEBI" id="CHEBI:61557"/>
        <dbReference type="ChEBI" id="CHEBI:140395"/>
        <dbReference type="EC" id="2.7.7.6"/>
    </reaction>
</comment>
<comment type="subunit">
    <text evidence="1">The RNAP catalytic core consists of 2 alpha, 1 beta, 1 beta' and 1 omega subunit. When a sigma factor is associated with the core the holoenzyme is formed, which can initiate transcription.</text>
</comment>
<comment type="similarity">
    <text evidence="1">Belongs to the RNA polymerase subunit omega family.</text>
</comment>
<gene>
    <name evidence="1" type="primary">rpoZ</name>
    <name type="ordered locus">Exig_1929</name>
</gene>
<organism>
    <name type="scientific">Exiguobacterium sibiricum (strain DSM 17290 / CCUG 55495 / CIP 109462 / JCM 13490 / 255-15)</name>
    <dbReference type="NCBI Taxonomy" id="262543"/>
    <lineage>
        <taxon>Bacteria</taxon>
        <taxon>Bacillati</taxon>
        <taxon>Bacillota</taxon>
        <taxon>Bacilli</taxon>
        <taxon>Bacillales</taxon>
        <taxon>Bacillales Family XII. Incertae Sedis</taxon>
        <taxon>Exiguobacterium</taxon>
    </lineage>
</organism>
<name>RPOZ_EXIS2</name>
<reference key="1">
    <citation type="submission" date="2008-04" db="EMBL/GenBank/DDBJ databases">
        <title>Complete sequence of chromosome of Exiguobacterium sibiricum 255-15.</title>
        <authorList>
            <consortium name="US DOE Joint Genome Institute"/>
            <person name="Copeland A."/>
            <person name="Lucas S."/>
            <person name="Lapidus A."/>
            <person name="Glavina del Rio T."/>
            <person name="Dalin E."/>
            <person name="Tice H."/>
            <person name="Bruce D."/>
            <person name="Goodwin L."/>
            <person name="Pitluck S."/>
            <person name="Kiss H."/>
            <person name="Chertkov O."/>
            <person name="Monk C."/>
            <person name="Brettin T."/>
            <person name="Detter J.C."/>
            <person name="Han C."/>
            <person name="Kuske C.R."/>
            <person name="Schmutz J."/>
            <person name="Larimer F."/>
            <person name="Land M."/>
            <person name="Hauser L."/>
            <person name="Kyrpides N."/>
            <person name="Mikhailova N."/>
            <person name="Vishnivetskaya T."/>
            <person name="Rodrigues D.F."/>
            <person name="Gilichinsky D."/>
            <person name="Tiedje J."/>
            <person name="Richardson P."/>
        </authorList>
    </citation>
    <scope>NUCLEOTIDE SEQUENCE [LARGE SCALE GENOMIC DNA]</scope>
    <source>
        <strain>DSM 17290 / CCUG 55495 / CIP 109462 / JCM 13490 / 255-15</strain>
    </source>
</reference>
<feature type="chain" id="PRO_1000121225" description="DNA-directed RNA polymerase subunit omega">
    <location>
        <begin position="1"/>
        <end position="67"/>
    </location>
</feature>
<sequence length="67" mass="7445">MLYPSVDKLQKTVPSKYTIVTVAAKRARQIQDGKRVKVANPKSYKPVGKALEELFSGEVVVTNQPQD</sequence>
<keyword id="KW-0240">DNA-directed RNA polymerase</keyword>
<keyword id="KW-0548">Nucleotidyltransferase</keyword>
<keyword id="KW-1185">Reference proteome</keyword>
<keyword id="KW-0804">Transcription</keyword>
<keyword id="KW-0808">Transferase</keyword>
<protein>
    <recommendedName>
        <fullName evidence="1">DNA-directed RNA polymerase subunit omega</fullName>
        <shortName evidence="1">RNAP omega subunit</shortName>
        <ecNumber evidence="1">2.7.7.6</ecNumber>
    </recommendedName>
    <alternativeName>
        <fullName evidence="1">RNA polymerase omega subunit</fullName>
    </alternativeName>
    <alternativeName>
        <fullName evidence="1">Transcriptase subunit omega</fullName>
    </alternativeName>
</protein>
<evidence type="ECO:0000255" key="1">
    <source>
        <dbReference type="HAMAP-Rule" id="MF_00366"/>
    </source>
</evidence>
<accession>B1YIQ5</accession>